<dbReference type="EMBL" id="CP000462">
    <property type="protein sequence ID" value="ABK39104.1"/>
    <property type="molecule type" value="Genomic_DNA"/>
</dbReference>
<dbReference type="RefSeq" id="WP_011707703.1">
    <property type="nucleotide sequence ID" value="NC_008570.1"/>
</dbReference>
<dbReference type="RefSeq" id="YP_858458.1">
    <property type="nucleotide sequence ID" value="NC_008570.1"/>
</dbReference>
<dbReference type="STRING" id="380703.AHA_4030"/>
<dbReference type="EnsemblBacteria" id="ABK39104">
    <property type="protein sequence ID" value="ABK39104"/>
    <property type="gene ID" value="AHA_4030"/>
</dbReference>
<dbReference type="GeneID" id="4488029"/>
<dbReference type="KEGG" id="aha:AHA_4030"/>
<dbReference type="PATRIC" id="fig|380703.7.peg.3990"/>
<dbReference type="eggNOG" id="COG0244">
    <property type="taxonomic scope" value="Bacteria"/>
</dbReference>
<dbReference type="HOGENOM" id="CLU_092227_0_2_6"/>
<dbReference type="OrthoDB" id="9808307at2"/>
<dbReference type="Proteomes" id="UP000000756">
    <property type="component" value="Chromosome"/>
</dbReference>
<dbReference type="GO" id="GO:0015934">
    <property type="term" value="C:large ribosomal subunit"/>
    <property type="evidence" value="ECO:0007669"/>
    <property type="project" value="InterPro"/>
</dbReference>
<dbReference type="GO" id="GO:0070180">
    <property type="term" value="F:large ribosomal subunit rRNA binding"/>
    <property type="evidence" value="ECO:0007669"/>
    <property type="project" value="UniProtKB-UniRule"/>
</dbReference>
<dbReference type="GO" id="GO:0003735">
    <property type="term" value="F:structural constituent of ribosome"/>
    <property type="evidence" value="ECO:0007669"/>
    <property type="project" value="InterPro"/>
</dbReference>
<dbReference type="GO" id="GO:0006412">
    <property type="term" value="P:translation"/>
    <property type="evidence" value="ECO:0007669"/>
    <property type="project" value="UniProtKB-UniRule"/>
</dbReference>
<dbReference type="CDD" id="cd05797">
    <property type="entry name" value="Ribosomal_L10"/>
    <property type="match status" value="1"/>
</dbReference>
<dbReference type="FunFam" id="3.30.70.1730:FF:000001">
    <property type="entry name" value="50S ribosomal protein L10"/>
    <property type="match status" value="1"/>
</dbReference>
<dbReference type="Gene3D" id="3.30.70.1730">
    <property type="match status" value="1"/>
</dbReference>
<dbReference type="Gene3D" id="6.10.250.2350">
    <property type="match status" value="1"/>
</dbReference>
<dbReference type="HAMAP" id="MF_00362">
    <property type="entry name" value="Ribosomal_uL10"/>
    <property type="match status" value="1"/>
</dbReference>
<dbReference type="InterPro" id="IPR001790">
    <property type="entry name" value="Ribosomal_uL10"/>
</dbReference>
<dbReference type="InterPro" id="IPR043141">
    <property type="entry name" value="Ribosomal_uL10-like_sf"/>
</dbReference>
<dbReference type="InterPro" id="IPR022973">
    <property type="entry name" value="Ribosomal_uL10_bac"/>
</dbReference>
<dbReference type="InterPro" id="IPR047865">
    <property type="entry name" value="Ribosomal_uL10_bac_type"/>
</dbReference>
<dbReference type="InterPro" id="IPR002363">
    <property type="entry name" value="Ribosomal_uL10_CS_bac"/>
</dbReference>
<dbReference type="NCBIfam" id="NF000955">
    <property type="entry name" value="PRK00099.1-1"/>
    <property type="match status" value="1"/>
</dbReference>
<dbReference type="PANTHER" id="PTHR11560">
    <property type="entry name" value="39S RIBOSOMAL PROTEIN L10, MITOCHONDRIAL"/>
    <property type="match status" value="1"/>
</dbReference>
<dbReference type="Pfam" id="PF00466">
    <property type="entry name" value="Ribosomal_L10"/>
    <property type="match status" value="1"/>
</dbReference>
<dbReference type="SUPFAM" id="SSF160369">
    <property type="entry name" value="Ribosomal protein L10-like"/>
    <property type="match status" value="1"/>
</dbReference>
<dbReference type="PROSITE" id="PS01109">
    <property type="entry name" value="RIBOSOMAL_L10"/>
    <property type="match status" value="1"/>
</dbReference>
<sequence>MALGLEDKKAIVAEVNEAAKGALSAVIADSRGVTVDKMTVLRKTAREAGVYMRVVRNTLLRRAVEGTEYECLNNAFTGPTLIAFSNEHPGAAARLFKEFAKANQKFEIKAGAFNGEFIAAAQIDRLATLPTYEEAIAKLMATMKEASAGKLVRTIAAVRDQKQAAA</sequence>
<evidence type="ECO:0000255" key="1">
    <source>
        <dbReference type="HAMAP-Rule" id="MF_00362"/>
    </source>
</evidence>
<evidence type="ECO:0000305" key="2"/>
<proteinExistence type="inferred from homology"/>
<name>RL10_AERHH</name>
<keyword id="KW-1185">Reference proteome</keyword>
<keyword id="KW-0687">Ribonucleoprotein</keyword>
<keyword id="KW-0689">Ribosomal protein</keyword>
<keyword id="KW-0694">RNA-binding</keyword>
<keyword id="KW-0699">rRNA-binding</keyword>
<protein>
    <recommendedName>
        <fullName evidence="1">Large ribosomal subunit protein uL10</fullName>
    </recommendedName>
    <alternativeName>
        <fullName evidence="2">50S ribosomal protein L10</fullName>
    </alternativeName>
</protein>
<feature type="chain" id="PRO_1000005460" description="Large ribosomal subunit protein uL10">
    <location>
        <begin position="1"/>
        <end position="166"/>
    </location>
</feature>
<accession>A0KQA7</accession>
<gene>
    <name evidence="1" type="primary">rplJ</name>
    <name type="ordered locus">AHA_4030</name>
</gene>
<organism>
    <name type="scientific">Aeromonas hydrophila subsp. hydrophila (strain ATCC 7966 / DSM 30187 / BCRC 13018 / CCUG 14551 / JCM 1027 / KCTC 2358 / NCIMB 9240 / NCTC 8049)</name>
    <dbReference type="NCBI Taxonomy" id="380703"/>
    <lineage>
        <taxon>Bacteria</taxon>
        <taxon>Pseudomonadati</taxon>
        <taxon>Pseudomonadota</taxon>
        <taxon>Gammaproteobacteria</taxon>
        <taxon>Aeromonadales</taxon>
        <taxon>Aeromonadaceae</taxon>
        <taxon>Aeromonas</taxon>
    </lineage>
</organism>
<reference key="1">
    <citation type="journal article" date="2006" name="J. Bacteriol.">
        <title>Genome sequence of Aeromonas hydrophila ATCC 7966T: jack of all trades.</title>
        <authorList>
            <person name="Seshadri R."/>
            <person name="Joseph S.W."/>
            <person name="Chopra A.K."/>
            <person name="Sha J."/>
            <person name="Shaw J."/>
            <person name="Graf J."/>
            <person name="Haft D.H."/>
            <person name="Wu M."/>
            <person name="Ren Q."/>
            <person name="Rosovitz M.J."/>
            <person name="Madupu R."/>
            <person name="Tallon L."/>
            <person name="Kim M."/>
            <person name="Jin S."/>
            <person name="Vuong H."/>
            <person name="Stine O.C."/>
            <person name="Ali A."/>
            <person name="Horneman A.J."/>
            <person name="Heidelberg J.F."/>
        </authorList>
    </citation>
    <scope>NUCLEOTIDE SEQUENCE [LARGE SCALE GENOMIC DNA]</scope>
    <source>
        <strain>ATCC 7966 / DSM 30187 / BCRC 13018 / CCUG 14551 / JCM 1027 / KCTC 2358 / NCIMB 9240 / NCTC 8049</strain>
    </source>
</reference>
<comment type="function">
    <text evidence="1">Forms part of the ribosomal stalk, playing a central role in the interaction of the ribosome with GTP-bound translation factors.</text>
</comment>
<comment type="subunit">
    <text evidence="1">Part of the ribosomal stalk of the 50S ribosomal subunit. The N-terminus interacts with L11 and the large rRNA to form the base of the stalk. The C-terminus forms an elongated spine to which L12 dimers bind in a sequential fashion forming a multimeric L10(L12)X complex.</text>
</comment>
<comment type="similarity">
    <text evidence="1">Belongs to the universal ribosomal protein uL10 family.</text>
</comment>